<gene>
    <name type="primary">OAF3</name>
    <name type="ORF">AWRI1631_112860</name>
</gene>
<reference key="1">
    <citation type="journal article" date="2008" name="FEMS Yeast Res.">
        <title>Comparative genome analysis of a Saccharomyces cerevisiae wine strain.</title>
        <authorList>
            <person name="Borneman A.R."/>
            <person name="Forgan A.H."/>
            <person name="Pretorius I.S."/>
            <person name="Chambers P.J."/>
        </authorList>
    </citation>
    <scope>NUCLEOTIDE SEQUENCE [LARGE SCALE GENOMIC DNA]</scope>
    <source>
        <strain>AWRI1631</strain>
    </source>
</reference>
<comment type="function">
    <text evidence="1">Transcriptional inhibitor with a significantly increased number of target genes in response to oleate.</text>
</comment>
<comment type="subcellular location">
    <subcellularLocation>
        <location evidence="1">Cytoplasm</location>
    </subcellularLocation>
    <subcellularLocation>
        <location evidence="2">Nucleus</location>
    </subcellularLocation>
    <subcellularLocation>
        <location evidence="1">Mitochondrion</location>
    </subcellularLocation>
</comment>
<comment type="similarity">
    <text evidence="4">Belongs to the OAF3 family.</text>
</comment>
<evidence type="ECO:0000250" key="1"/>
<evidence type="ECO:0000255" key="2">
    <source>
        <dbReference type="PROSITE-ProRule" id="PRU00227"/>
    </source>
</evidence>
<evidence type="ECO:0000256" key="3">
    <source>
        <dbReference type="SAM" id="MobiDB-lite"/>
    </source>
</evidence>
<evidence type="ECO:0000305" key="4"/>
<feature type="chain" id="PRO_0000409044" description="Oleate activated transcription factor 3">
    <location>
        <begin position="1"/>
        <end position="863"/>
    </location>
</feature>
<feature type="DNA-binding region" description="Zn(2)-C6 fungal-type" evidence="2">
    <location>
        <begin position="19"/>
        <end position="47"/>
    </location>
</feature>
<feature type="region of interest" description="Disordered" evidence="3">
    <location>
        <begin position="52"/>
        <end position="81"/>
    </location>
</feature>
<feature type="compositionally biased region" description="Polar residues" evidence="3">
    <location>
        <begin position="52"/>
        <end position="63"/>
    </location>
</feature>
<dbReference type="EMBL" id="ABSV01001510">
    <property type="protein sequence ID" value="EDZ70835.1"/>
    <property type="molecule type" value="Genomic_DNA"/>
</dbReference>
<dbReference type="SMR" id="B5VML1"/>
<dbReference type="Proteomes" id="UP000008988">
    <property type="component" value="Unassembled WGS sequence"/>
</dbReference>
<dbReference type="GO" id="GO:0005739">
    <property type="term" value="C:mitochondrion"/>
    <property type="evidence" value="ECO:0007669"/>
    <property type="project" value="UniProtKB-SubCell"/>
</dbReference>
<dbReference type="GO" id="GO:0005634">
    <property type="term" value="C:nucleus"/>
    <property type="evidence" value="ECO:0007669"/>
    <property type="project" value="UniProtKB-SubCell"/>
</dbReference>
<dbReference type="GO" id="GO:0000981">
    <property type="term" value="F:DNA-binding transcription factor activity, RNA polymerase II-specific"/>
    <property type="evidence" value="ECO:0007669"/>
    <property type="project" value="InterPro"/>
</dbReference>
<dbReference type="GO" id="GO:0000978">
    <property type="term" value="F:RNA polymerase II cis-regulatory region sequence-specific DNA binding"/>
    <property type="evidence" value="ECO:0007669"/>
    <property type="project" value="TreeGrafter"/>
</dbReference>
<dbReference type="GO" id="GO:0008270">
    <property type="term" value="F:zinc ion binding"/>
    <property type="evidence" value="ECO:0007669"/>
    <property type="project" value="InterPro"/>
</dbReference>
<dbReference type="GO" id="GO:0045944">
    <property type="term" value="P:positive regulation of transcription by RNA polymerase II"/>
    <property type="evidence" value="ECO:0007669"/>
    <property type="project" value="TreeGrafter"/>
</dbReference>
<dbReference type="CDD" id="cd12148">
    <property type="entry name" value="fungal_TF_MHR"/>
    <property type="match status" value="1"/>
</dbReference>
<dbReference type="CDD" id="cd00067">
    <property type="entry name" value="GAL4"/>
    <property type="match status" value="1"/>
</dbReference>
<dbReference type="Gene3D" id="4.10.240.10">
    <property type="entry name" value="Zn(2)-C6 fungal-type DNA-binding domain"/>
    <property type="match status" value="1"/>
</dbReference>
<dbReference type="InterPro" id="IPR050675">
    <property type="entry name" value="OAF3"/>
</dbReference>
<dbReference type="InterPro" id="IPR036864">
    <property type="entry name" value="Zn2-C6_fun-type_DNA-bd_sf"/>
</dbReference>
<dbReference type="InterPro" id="IPR001138">
    <property type="entry name" value="Zn2Cys6_DnaBD"/>
</dbReference>
<dbReference type="PANTHER" id="PTHR31069:SF33">
    <property type="entry name" value="OLEATE ACTIVATED TRANSCRIPTION FACTOR 3"/>
    <property type="match status" value="1"/>
</dbReference>
<dbReference type="PANTHER" id="PTHR31069">
    <property type="entry name" value="OLEATE-ACTIVATED TRANSCRIPTION FACTOR 1-RELATED"/>
    <property type="match status" value="1"/>
</dbReference>
<dbReference type="Pfam" id="PF00172">
    <property type="entry name" value="Zn_clus"/>
    <property type="match status" value="1"/>
</dbReference>
<dbReference type="SMART" id="SM00066">
    <property type="entry name" value="GAL4"/>
    <property type="match status" value="1"/>
</dbReference>
<dbReference type="SUPFAM" id="SSF57701">
    <property type="entry name" value="Zn2/Cys6 DNA-binding domain"/>
    <property type="match status" value="1"/>
</dbReference>
<dbReference type="PROSITE" id="PS00463">
    <property type="entry name" value="ZN2_CY6_FUNGAL_1"/>
    <property type="match status" value="1"/>
</dbReference>
<dbReference type="PROSITE" id="PS50048">
    <property type="entry name" value="ZN2_CY6_FUNGAL_2"/>
    <property type="match status" value="1"/>
</dbReference>
<proteinExistence type="inferred from homology"/>
<sequence length="863" mass="101906">MGYDSQVRTKKRHRITVVCTNCKKRKSKCDRTKPCGTCVRLGDVDSCVYLTDSSGQPESSPSLNDADPLRKQSTPAERISPGFIKKRRSSQTRQDEDHWQRVRELESQSSLYYLPIHEETPFFIDLIPNGFYLETKRSADNLFGLFTDRAIENRDPYLQAMVTFRSIAIKKMMDKLGSNGNNVKNGSLPKSFEALSTFDADDERHISDDVVDKGNNFRMHQTIHKSLFNKFAQYRENNAKKFSSETILAKDYLPPLKILESEVLALFEEKIYNMIPIFDMKILRHEITIFYQNIVEKGNPISIKHYDHMVFCIILLIIKICRLSVQFSKLTPYIYPVLQEIDTSKFLALVKHYLFETKVLRKCNFLQLQCLILLRFLHWCAPEDGDGPETQYCQILMGTIISSCKEMGINWYCFSHPEKYSFKINRHTRPSYDIMKPSDYISVFRKIWSYVLFWDRKMCFISGEECQIGKTLQCHFKEEADTPTWYIRMLTLDNLMKKINDTLNDDPGKVDLNLLHRLINDLKRNFHILKSLSKNEKETMRHFDFEMEWIIDLFSLSLLHGEMIFYEYDCNITKFYKSFQDLWDMVIHISEKCYNYFFNSDALEVDSLTKFYTNRIVEIVANKVLVIVPAFILRGDRFKTIQYADKKKMIEFLYGVSSVYFNEFGFEYYRCFRKMFTAKIAYKILNRSCEKDAWRIILKFLLNELKLEDNGDSYIDYNDMRLKDICPIILEFQETVQKYDGYRPDILSIWNNEFYPIGKYNDDMTGFKFQMRIKEMQEFLDMEKYSDRFNIFSSFYDHASSQLAKHTEVDTNISITNEQVAETPQKELLQQPLAPALPVNDLIVSEFDVIEDIFDPVDFVSFF</sequence>
<protein>
    <recommendedName>
        <fullName>Oleate activated transcription factor 3</fullName>
    </recommendedName>
</protein>
<name>OAF3_YEAS6</name>
<organism>
    <name type="scientific">Saccharomyces cerevisiae (strain AWRI1631)</name>
    <name type="common">Baker's yeast</name>
    <dbReference type="NCBI Taxonomy" id="545124"/>
    <lineage>
        <taxon>Eukaryota</taxon>
        <taxon>Fungi</taxon>
        <taxon>Dikarya</taxon>
        <taxon>Ascomycota</taxon>
        <taxon>Saccharomycotina</taxon>
        <taxon>Saccharomycetes</taxon>
        <taxon>Saccharomycetales</taxon>
        <taxon>Saccharomycetaceae</taxon>
        <taxon>Saccharomyces</taxon>
    </lineage>
</organism>
<accession>B5VML1</accession>
<keyword id="KW-0963">Cytoplasm</keyword>
<keyword id="KW-0238">DNA-binding</keyword>
<keyword id="KW-0479">Metal-binding</keyword>
<keyword id="KW-0496">Mitochondrion</keyword>
<keyword id="KW-0539">Nucleus</keyword>
<keyword id="KW-0678">Repressor</keyword>
<keyword id="KW-0804">Transcription</keyword>
<keyword id="KW-0805">Transcription regulation</keyword>
<keyword id="KW-0862">Zinc</keyword>